<gene>
    <name evidence="1" type="primary">lipA2</name>
    <name type="ordered locus">gll3526</name>
</gene>
<dbReference type="EC" id="2.8.1.8" evidence="1"/>
<dbReference type="EMBL" id="BA000045">
    <property type="protein sequence ID" value="BAC91467.1"/>
    <property type="molecule type" value="Genomic_DNA"/>
</dbReference>
<dbReference type="RefSeq" id="NP_926472.1">
    <property type="nucleotide sequence ID" value="NC_005125.1"/>
</dbReference>
<dbReference type="SMR" id="Q7NFJ9"/>
<dbReference type="FunCoup" id="Q7NFJ9">
    <property type="interactions" value="389"/>
</dbReference>
<dbReference type="STRING" id="251221.gene:10761039"/>
<dbReference type="EnsemblBacteria" id="BAC91467">
    <property type="protein sequence ID" value="BAC91467"/>
    <property type="gene ID" value="BAC91467"/>
</dbReference>
<dbReference type="KEGG" id="gvi:gll3526"/>
<dbReference type="PATRIC" id="fig|251221.4.peg.3559"/>
<dbReference type="eggNOG" id="COG0320">
    <property type="taxonomic scope" value="Bacteria"/>
</dbReference>
<dbReference type="HOGENOM" id="CLU_033144_2_1_3"/>
<dbReference type="InParanoid" id="Q7NFJ9"/>
<dbReference type="OrthoDB" id="9787898at2"/>
<dbReference type="PhylomeDB" id="Q7NFJ9"/>
<dbReference type="UniPathway" id="UPA00538">
    <property type="reaction ID" value="UER00593"/>
</dbReference>
<dbReference type="Proteomes" id="UP000000557">
    <property type="component" value="Chromosome"/>
</dbReference>
<dbReference type="GO" id="GO:0005737">
    <property type="term" value="C:cytoplasm"/>
    <property type="evidence" value="ECO:0007669"/>
    <property type="project" value="UniProtKB-SubCell"/>
</dbReference>
<dbReference type="GO" id="GO:0051539">
    <property type="term" value="F:4 iron, 4 sulfur cluster binding"/>
    <property type="evidence" value="ECO:0007669"/>
    <property type="project" value="UniProtKB-UniRule"/>
</dbReference>
<dbReference type="GO" id="GO:0016992">
    <property type="term" value="F:lipoate synthase activity"/>
    <property type="evidence" value="ECO:0007669"/>
    <property type="project" value="UniProtKB-UniRule"/>
</dbReference>
<dbReference type="GO" id="GO:0046872">
    <property type="term" value="F:metal ion binding"/>
    <property type="evidence" value="ECO:0007669"/>
    <property type="project" value="UniProtKB-KW"/>
</dbReference>
<dbReference type="CDD" id="cd01335">
    <property type="entry name" value="Radical_SAM"/>
    <property type="match status" value="1"/>
</dbReference>
<dbReference type="FunFam" id="3.20.20.70:FF:000480">
    <property type="entry name" value="Lipoyl synthase 2"/>
    <property type="match status" value="1"/>
</dbReference>
<dbReference type="Gene3D" id="3.20.20.70">
    <property type="entry name" value="Aldolase class I"/>
    <property type="match status" value="1"/>
</dbReference>
<dbReference type="HAMAP" id="MF_00206">
    <property type="entry name" value="Lipoyl_synth"/>
    <property type="match status" value="1"/>
</dbReference>
<dbReference type="InterPro" id="IPR013785">
    <property type="entry name" value="Aldolase_TIM"/>
</dbReference>
<dbReference type="InterPro" id="IPR006638">
    <property type="entry name" value="Elp3/MiaA/NifB-like_rSAM"/>
</dbReference>
<dbReference type="InterPro" id="IPR003698">
    <property type="entry name" value="Lipoyl_synth"/>
</dbReference>
<dbReference type="InterPro" id="IPR007197">
    <property type="entry name" value="rSAM"/>
</dbReference>
<dbReference type="NCBIfam" id="TIGR00510">
    <property type="entry name" value="lipA"/>
    <property type="match status" value="1"/>
</dbReference>
<dbReference type="NCBIfam" id="NF004019">
    <property type="entry name" value="PRK05481.1"/>
    <property type="match status" value="1"/>
</dbReference>
<dbReference type="NCBIfam" id="NF009544">
    <property type="entry name" value="PRK12928.1"/>
    <property type="match status" value="1"/>
</dbReference>
<dbReference type="PANTHER" id="PTHR10949">
    <property type="entry name" value="LIPOYL SYNTHASE"/>
    <property type="match status" value="1"/>
</dbReference>
<dbReference type="PANTHER" id="PTHR10949:SF0">
    <property type="entry name" value="LIPOYL SYNTHASE, MITOCHONDRIAL"/>
    <property type="match status" value="1"/>
</dbReference>
<dbReference type="Pfam" id="PF04055">
    <property type="entry name" value="Radical_SAM"/>
    <property type="match status" value="1"/>
</dbReference>
<dbReference type="PIRSF" id="PIRSF005963">
    <property type="entry name" value="Lipoyl_synth"/>
    <property type="match status" value="1"/>
</dbReference>
<dbReference type="SFLD" id="SFLDF00271">
    <property type="entry name" value="lipoyl_synthase"/>
    <property type="match status" value="1"/>
</dbReference>
<dbReference type="SFLD" id="SFLDS00029">
    <property type="entry name" value="Radical_SAM"/>
    <property type="match status" value="1"/>
</dbReference>
<dbReference type="SMART" id="SM00729">
    <property type="entry name" value="Elp3"/>
    <property type="match status" value="1"/>
</dbReference>
<dbReference type="SUPFAM" id="SSF102114">
    <property type="entry name" value="Radical SAM enzymes"/>
    <property type="match status" value="1"/>
</dbReference>
<dbReference type="PROSITE" id="PS51918">
    <property type="entry name" value="RADICAL_SAM"/>
    <property type="match status" value="1"/>
</dbReference>
<feature type="chain" id="PRO_0000102317" description="Lipoyl synthase 2">
    <location>
        <begin position="1"/>
        <end position="289"/>
    </location>
</feature>
<feature type="domain" description="Radical SAM core" evidence="2">
    <location>
        <begin position="55"/>
        <end position="271"/>
    </location>
</feature>
<feature type="binding site" evidence="1">
    <location>
        <position position="43"/>
    </location>
    <ligand>
        <name>[4Fe-4S] cluster</name>
        <dbReference type="ChEBI" id="CHEBI:49883"/>
        <label>1</label>
    </ligand>
</feature>
<feature type="binding site" evidence="1">
    <location>
        <position position="48"/>
    </location>
    <ligand>
        <name>[4Fe-4S] cluster</name>
        <dbReference type="ChEBI" id="CHEBI:49883"/>
        <label>1</label>
    </ligand>
</feature>
<feature type="binding site" evidence="1">
    <location>
        <position position="54"/>
    </location>
    <ligand>
        <name>[4Fe-4S] cluster</name>
        <dbReference type="ChEBI" id="CHEBI:49883"/>
        <label>1</label>
    </ligand>
</feature>
<feature type="binding site" evidence="1">
    <location>
        <position position="69"/>
    </location>
    <ligand>
        <name>[4Fe-4S] cluster</name>
        <dbReference type="ChEBI" id="CHEBI:49883"/>
        <label>2</label>
        <note>4Fe-4S-S-AdoMet</note>
    </ligand>
</feature>
<feature type="binding site" evidence="1">
    <location>
        <position position="73"/>
    </location>
    <ligand>
        <name>[4Fe-4S] cluster</name>
        <dbReference type="ChEBI" id="CHEBI:49883"/>
        <label>2</label>
        <note>4Fe-4S-S-AdoMet</note>
    </ligand>
</feature>
<feature type="binding site" evidence="1">
    <location>
        <position position="76"/>
    </location>
    <ligand>
        <name>[4Fe-4S] cluster</name>
        <dbReference type="ChEBI" id="CHEBI:49883"/>
        <label>2</label>
        <note>4Fe-4S-S-AdoMet</note>
    </ligand>
</feature>
<feature type="binding site" evidence="1">
    <location>
        <position position="282"/>
    </location>
    <ligand>
        <name>[4Fe-4S] cluster</name>
        <dbReference type="ChEBI" id="CHEBI:49883"/>
        <label>1</label>
    </ligand>
</feature>
<protein>
    <recommendedName>
        <fullName evidence="1">Lipoyl synthase 2</fullName>
        <ecNumber evidence="1">2.8.1.8</ecNumber>
    </recommendedName>
    <alternativeName>
        <fullName evidence="1">Lip-syn 2</fullName>
        <shortName evidence="1">LS 2</shortName>
    </alternativeName>
    <alternativeName>
        <fullName evidence="1">Lipoate synthase 2</fullName>
    </alternativeName>
    <alternativeName>
        <fullName evidence="1">Lipoic acid synthase 2</fullName>
    </alternativeName>
    <alternativeName>
        <fullName evidence="1">Sulfur insertion protein LipA 2</fullName>
    </alternativeName>
</protein>
<keyword id="KW-0004">4Fe-4S</keyword>
<keyword id="KW-0963">Cytoplasm</keyword>
<keyword id="KW-0408">Iron</keyword>
<keyword id="KW-0411">Iron-sulfur</keyword>
<keyword id="KW-0479">Metal-binding</keyword>
<keyword id="KW-1185">Reference proteome</keyword>
<keyword id="KW-0949">S-adenosyl-L-methionine</keyword>
<keyword id="KW-0808">Transferase</keyword>
<comment type="function">
    <text evidence="1">Catalyzes the radical-mediated insertion of two sulfur atoms into the C-6 and C-8 positions of the octanoyl moiety bound to the lipoyl domains of lipoate-dependent enzymes, thereby converting the octanoylated domains into lipoylated derivatives.</text>
</comment>
<comment type="catalytic activity">
    <reaction evidence="1">
        <text>[[Fe-S] cluster scaffold protein carrying a second [4Fe-4S](2+) cluster] + N(6)-octanoyl-L-lysyl-[protein] + 2 oxidized [2Fe-2S]-[ferredoxin] + 2 S-adenosyl-L-methionine + 4 H(+) = [[Fe-S] cluster scaffold protein] + N(6)-[(R)-dihydrolipoyl]-L-lysyl-[protein] + 4 Fe(3+) + 2 hydrogen sulfide + 2 5'-deoxyadenosine + 2 L-methionine + 2 reduced [2Fe-2S]-[ferredoxin]</text>
        <dbReference type="Rhea" id="RHEA:16585"/>
        <dbReference type="Rhea" id="RHEA-COMP:9928"/>
        <dbReference type="Rhea" id="RHEA-COMP:10000"/>
        <dbReference type="Rhea" id="RHEA-COMP:10001"/>
        <dbReference type="Rhea" id="RHEA-COMP:10475"/>
        <dbReference type="Rhea" id="RHEA-COMP:14568"/>
        <dbReference type="Rhea" id="RHEA-COMP:14569"/>
        <dbReference type="ChEBI" id="CHEBI:15378"/>
        <dbReference type="ChEBI" id="CHEBI:17319"/>
        <dbReference type="ChEBI" id="CHEBI:29034"/>
        <dbReference type="ChEBI" id="CHEBI:29919"/>
        <dbReference type="ChEBI" id="CHEBI:33722"/>
        <dbReference type="ChEBI" id="CHEBI:33737"/>
        <dbReference type="ChEBI" id="CHEBI:33738"/>
        <dbReference type="ChEBI" id="CHEBI:57844"/>
        <dbReference type="ChEBI" id="CHEBI:59789"/>
        <dbReference type="ChEBI" id="CHEBI:78809"/>
        <dbReference type="ChEBI" id="CHEBI:83100"/>
        <dbReference type="EC" id="2.8.1.8"/>
    </reaction>
</comment>
<comment type="cofactor">
    <cofactor evidence="1">
        <name>[4Fe-4S] cluster</name>
        <dbReference type="ChEBI" id="CHEBI:49883"/>
    </cofactor>
    <text evidence="1">Binds 2 [4Fe-4S] clusters per subunit. One cluster is coordinated with 3 cysteines and an exchangeable S-adenosyl-L-methionine.</text>
</comment>
<comment type="pathway">
    <text evidence="1">Protein modification; protein lipoylation via endogenous pathway; protein N(6)-(lipoyl)lysine from octanoyl-[acyl-carrier-protein]: step 2/2.</text>
</comment>
<comment type="subcellular location">
    <subcellularLocation>
        <location evidence="1">Cytoplasm</location>
    </subcellularLocation>
</comment>
<comment type="similarity">
    <text evidence="1">Belongs to the radical SAM superfamily. Lipoyl synthase family.</text>
</comment>
<reference key="1">
    <citation type="journal article" date="2003" name="DNA Res.">
        <title>Complete genome structure of Gloeobacter violaceus PCC 7421, a cyanobacterium that lacks thylakoids.</title>
        <authorList>
            <person name="Nakamura Y."/>
            <person name="Kaneko T."/>
            <person name="Sato S."/>
            <person name="Mimuro M."/>
            <person name="Miyashita H."/>
            <person name="Tsuchiya T."/>
            <person name="Sasamoto S."/>
            <person name="Watanabe A."/>
            <person name="Kawashima K."/>
            <person name="Kishida Y."/>
            <person name="Kiyokawa C."/>
            <person name="Kohara M."/>
            <person name="Matsumoto M."/>
            <person name="Matsuno A."/>
            <person name="Nakazaki N."/>
            <person name="Shimpo S."/>
            <person name="Takeuchi C."/>
            <person name="Yamada M."/>
            <person name="Tabata S."/>
        </authorList>
    </citation>
    <scope>NUCLEOTIDE SEQUENCE [LARGE SCALE GENOMIC DNA]</scope>
    <source>
        <strain>ATCC 29082 / PCC 7421</strain>
    </source>
</reference>
<sequence length="289" mass="31777">MLAMSHQTASSRLPEWARRTIGTASQVSTVEKIVKQRSLHTICEEGRCPNRAECYAQKTATFLLMGPVCTRACGFCQVAGGKALPLDPQEPEKVAEAVALLGLKYVVLTSVARDDLPDQGAGWFVRTMESIRARNCAVEIEVLTPDFRGEEACIATVVAARPVCFNHNIETVRRLQSYARRAATYARSLAVLAAVKRLDAEIFTKSGLMLGHGETREEVLETLLDLRKVGCDRVTLGQYLQPSKDHLPVHKYWTPAEFAELGAVARDLGFAHVRSGPLVRSSYHAGEPE</sequence>
<accession>Q7NFJ9</accession>
<name>LIPA2_GLOVI</name>
<evidence type="ECO:0000255" key="1">
    <source>
        <dbReference type="HAMAP-Rule" id="MF_00206"/>
    </source>
</evidence>
<evidence type="ECO:0000255" key="2">
    <source>
        <dbReference type="PROSITE-ProRule" id="PRU01266"/>
    </source>
</evidence>
<proteinExistence type="inferred from homology"/>
<organism>
    <name type="scientific">Gloeobacter violaceus (strain ATCC 29082 / PCC 7421)</name>
    <dbReference type="NCBI Taxonomy" id="251221"/>
    <lineage>
        <taxon>Bacteria</taxon>
        <taxon>Bacillati</taxon>
        <taxon>Cyanobacteriota</taxon>
        <taxon>Cyanophyceae</taxon>
        <taxon>Gloeobacterales</taxon>
        <taxon>Gloeobacteraceae</taxon>
        <taxon>Gloeobacter</taxon>
    </lineage>
</organism>